<name>RS17_OPITP</name>
<proteinExistence type="inferred from homology"/>
<feature type="chain" id="PRO_1000143279" description="Small ribosomal subunit protein uS17">
    <location>
        <begin position="1"/>
        <end position="125"/>
    </location>
</feature>
<feature type="region of interest" description="Disordered" evidence="2">
    <location>
        <begin position="1"/>
        <end position="21"/>
    </location>
</feature>
<feature type="region of interest" description="Disordered" evidence="2">
    <location>
        <begin position="101"/>
        <end position="125"/>
    </location>
</feature>
<sequence>MSSSPAQRHTRKTQIGFVSSRSGDKSIKVTVPYKSPHPLYHKIVNRQTVLHVHDEKNEAKLGDTVEVMETRPMSRLKRWRIVSIVQRAVTTDAVAISETDVAAQVPTKTTASNTPAPAEQPAPQA</sequence>
<evidence type="ECO:0000255" key="1">
    <source>
        <dbReference type="HAMAP-Rule" id="MF_01345"/>
    </source>
</evidence>
<evidence type="ECO:0000256" key="2">
    <source>
        <dbReference type="SAM" id="MobiDB-lite"/>
    </source>
</evidence>
<evidence type="ECO:0000305" key="3"/>
<gene>
    <name evidence="1" type="primary">rpsQ</name>
    <name type="ordered locus">Oter_0217</name>
</gene>
<organism>
    <name type="scientific">Opitutus terrae (strain DSM 11246 / JCM 15787 / PB90-1)</name>
    <dbReference type="NCBI Taxonomy" id="452637"/>
    <lineage>
        <taxon>Bacteria</taxon>
        <taxon>Pseudomonadati</taxon>
        <taxon>Verrucomicrobiota</taxon>
        <taxon>Opitutia</taxon>
        <taxon>Opitutales</taxon>
        <taxon>Opitutaceae</taxon>
        <taxon>Opitutus</taxon>
    </lineage>
</organism>
<protein>
    <recommendedName>
        <fullName evidence="1">Small ribosomal subunit protein uS17</fullName>
    </recommendedName>
    <alternativeName>
        <fullName evidence="3">30S ribosomal protein S17</fullName>
    </alternativeName>
</protein>
<dbReference type="EMBL" id="CP001032">
    <property type="protein sequence ID" value="ACB73508.1"/>
    <property type="molecule type" value="Genomic_DNA"/>
</dbReference>
<dbReference type="RefSeq" id="WP_012373046.1">
    <property type="nucleotide sequence ID" value="NC_010571.1"/>
</dbReference>
<dbReference type="SMR" id="B1ZND9"/>
<dbReference type="STRING" id="452637.Oter_0217"/>
<dbReference type="KEGG" id="ote:Oter_0217"/>
<dbReference type="eggNOG" id="COG0186">
    <property type="taxonomic scope" value="Bacteria"/>
</dbReference>
<dbReference type="HOGENOM" id="CLU_073626_1_2_0"/>
<dbReference type="OrthoDB" id="9811714at2"/>
<dbReference type="Proteomes" id="UP000007013">
    <property type="component" value="Chromosome"/>
</dbReference>
<dbReference type="GO" id="GO:0022627">
    <property type="term" value="C:cytosolic small ribosomal subunit"/>
    <property type="evidence" value="ECO:0007669"/>
    <property type="project" value="TreeGrafter"/>
</dbReference>
<dbReference type="GO" id="GO:0019843">
    <property type="term" value="F:rRNA binding"/>
    <property type="evidence" value="ECO:0007669"/>
    <property type="project" value="UniProtKB-UniRule"/>
</dbReference>
<dbReference type="GO" id="GO:0003735">
    <property type="term" value="F:structural constituent of ribosome"/>
    <property type="evidence" value="ECO:0007669"/>
    <property type="project" value="InterPro"/>
</dbReference>
<dbReference type="GO" id="GO:0006412">
    <property type="term" value="P:translation"/>
    <property type="evidence" value="ECO:0007669"/>
    <property type="project" value="UniProtKB-UniRule"/>
</dbReference>
<dbReference type="CDD" id="cd00364">
    <property type="entry name" value="Ribosomal_uS17"/>
    <property type="match status" value="1"/>
</dbReference>
<dbReference type="Gene3D" id="2.40.50.140">
    <property type="entry name" value="Nucleic acid-binding proteins"/>
    <property type="match status" value="1"/>
</dbReference>
<dbReference type="HAMAP" id="MF_01345_B">
    <property type="entry name" value="Ribosomal_uS17_B"/>
    <property type="match status" value="1"/>
</dbReference>
<dbReference type="InterPro" id="IPR012340">
    <property type="entry name" value="NA-bd_OB-fold"/>
</dbReference>
<dbReference type="InterPro" id="IPR000266">
    <property type="entry name" value="Ribosomal_uS17"/>
</dbReference>
<dbReference type="InterPro" id="IPR019984">
    <property type="entry name" value="Ribosomal_uS17_bact/chlr"/>
</dbReference>
<dbReference type="NCBIfam" id="NF004123">
    <property type="entry name" value="PRK05610.1"/>
    <property type="match status" value="1"/>
</dbReference>
<dbReference type="NCBIfam" id="TIGR03635">
    <property type="entry name" value="uS17_bact"/>
    <property type="match status" value="1"/>
</dbReference>
<dbReference type="PANTHER" id="PTHR10744">
    <property type="entry name" value="40S RIBOSOMAL PROTEIN S11 FAMILY MEMBER"/>
    <property type="match status" value="1"/>
</dbReference>
<dbReference type="PANTHER" id="PTHR10744:SF1">
    <property type="entry name" value="SMALL RIBOSOMAL SUBUNIT PROTEIN US17M"/>
    <property type="match status" value="1"/>
</dbReference>
<dbReference type="Pfam" id="PF00366">
    <property type="entry name" value="Ribosomal_S17"/>
    <property type="match status" value="1"/>
</dbReference>
<dbReference type="PRINTS" id="PR00973">
    <property type="entry name" value="RIBOSOMALS17"/>
</dbReference>
<dbReference type="SUPFAM" id="SSF50249">
    <property type="entry name" value="Nucleic acid-binding proteins"/>
    <property type="match status" value="1"/>
</dbReference>
<reference key="1">
    <citation type="journal article" date="2011" name="J. Bacteriol.">
        <title>Genome sequence of the verrucomicrobium Opitutus terrae PB90-1, an abundant inhabitant of rice paddy soil ecosystems.</title>
        <authorList>
            <person name="van Passel M.W."/>
            <person name="Kant R."/>
            <person name="Palva A."/>
            <person name="Copeland A."/>
            <person name="Lucas S."/>
            <person name="Lapidus A."/>
            <person name="Glavina del Rio T."/>
            <person name="Pitluck S."/>
            <person name="Goltsman E."/>
            <person name="Clum A."/>
            <person name="Sun H."/>
            <person name="Schmutz J."/>
            <person name="Larimer F.W."/>
            <person name="Land M.L."/>
            <person name="Hauser L."/>
            <person name="Kyrpides N."/>
            <person name="Mikhailova N."/>
            <person name="Richardson P.P."/>
            <person name="Janssen P.H."/>
            <person name="de Vos W.M."/>
            <person name="Smidt H."/>
        </authorList>
    </citation>
    <scope>NUCLEOTIDE SEQUENCE [LARGE SCALE GENOMIC DNA]</scope>
    <source>
        <strain>DSM 11246 / JCM 15787 / PB90-1</strain>
    </source>
</reference>
<accession>B1ZND9</accession>
<comment type="function">
    <text evidence="1">One of the primary rRNA binding proteins, it binds specifically to the 5'-end of 16S ribosomal RNA.</text>
</comment>
<comment type="subunit">
    <text evidence="1">Part of the 30S ribosomal subunit.</text>
</comment>
<comment type="similarity">
    <text evidence="1">Belongs to the universal ribosomal protein uS17 family.</text>
</comment>
<keyword id="KW-1185">Reference proteome</keyword>
<keyword id="KW-0687">Ribonucleoprotein</keyword>
<keyword id="KW-0689">Ribosomal protein</keyword>
<keyword id="KW-0694">RNA-binding</keyword>
<keyword id="KW-0699">rRNA-binding</keyword>